<evidence type="ECO:0000255" key="1">
    <source>
        <dbReference type="HAMAP-Rule" id="MF_00945"/>
    </source>
</evidence>
<evidence type="ECO:0000256" key="2">
    <source>
        <dbReference type="SAM" id="MobiDB-lite"/>
    </source>
</evidence>
<protein>
    <recommendedName>
        <fullName evidence="1">Transcription termination/antitermination protein NusA</fullName>
    </recommendedName>
</protein>
<dbReference type="EMBL" id="U00089">
    <property type="protein sequence ID" value="AAB96325.1"/>
    <property type="molecule type" value="Genomic_DNA"/>
</dbReference>
<dbReference type="PIR" id="S74003">
    <property type="entry name" value="S74003"/>
</dbReference>
<dbReference type="RefSeq" id="NP_109842.1">
    <property type="nucleotide sequence ID" value="NC_000912.1"/>
</dbReference>
<dbReference type="SMR" id="P75591"/>
<dbReference type="STRING" id="272634.MPN_154"/>
<dbReference type="EnsemblBacteria" id="AAB96325">
    <property type="protein sequence ID" value="AAB96325"/>
    <property type="gene ID" value="MPN_154"/>
</dbReference>
<dbReference type="KEGG" id="mpn:MPN_154"/>
<dbReference type="PATRIC" id="fig|272634.6.peg.171"/>
<dbReference type="HOGENOM" id="CLU_029242_2_2_14"/>
<dbReference type="OrthoDB" id="9807233at2"/>
<dbReference type="BioCyc" id="MPNE272634:G1GJ3-259-MONOMER"/>
<dbReference type="Proteomes" id="UP000000808">
    <property type="component" value="Chromosome"/>
</dbReference>
<dbReference type="GO" id="GO:0005829">
    <property type="term" value="C:cytosol"/>
    <property type="evidence" value="ECO:0007669"/>
    <property type="project" value="TreeGrafter"/>
</dbReference>
<dbReference type="GO" id="GO:0003700">
    <property type="term" value="F:DNA-binding transcription factor activity"/>
    <property type="evidence" value="ECO:0007669"/>
    <property type="project" value="InterPro"/>
</dbReference>
<dbReference type="GO" id="GO:0003723">
    <property type="term" value="F:RNA binding"/>
    <property type="evidence" value="ECO:0007669"/>
    <property type="project" value="UniProtKB-UniRule"/>
</dbReference>
<dbReference type="GO" id="GO:0006353">
    <property type="term" value="P:DNA-templated transcription termination"/>
    <property type="evidence" value="ECO:0007669"/>
    <property type="project" value="UniProtKB-UniRule"/>
</dbReference>
<dbReference type="GO" id="GO:0031564">
    <property type="term" value="P:transcription antitermination"/>
    <property type="evidence" value="ECO:0007669"/>
    <property type="project" value="UniProtKB-UniRule"/>
</dbReference>
<dbReference type="CDD" id="cd02134">
    <property type="entry name" value="KH-II_NusA_rpt1"/>
    <property type="match status" value="1"/>
</dbReference>
<dbReference type="CDD" id="cd22529">
    <property type="entry name" value="KH-II_NusA_rpt2"/>
    <property type="match status" value="1"/>
</dbReference>
<dbReference type="Gene3D" id="3.30.300.20">
    <property type="match status" value="2"/>
</dbReference>
<dbReference type="Gene3D" id="2.40.50.140">
    <property type="entry name" value="Nucleic acid-binding proteins"/>
    <property type="match status" value="1"/>
</dbReference>
<dbReference type="Gene3D" id="3.30.1480.10">
    <property type="entry name" value="NusA, N-terminal domain"/>
    <property type="match status" value="1"/>
</dbReference>
<dbReference type="HAMAP" id="MF_00945_B">
    <property type="entry name" value="NusA_B"/>
    <property type="match status" value="1"/>
</dbReference>
<dbReference type="InterPro" id="IPR004087">
    <property type="entry name" value="KH_dom"/>
</dbReference>
<dbReference type="InterPro" id="IPR015946">
    <property type="entry name" value="KH_dom-like_a/b"/>
</dbReference>
<dbReference type="InterPro" id="IPR025249">
    <property type="entry name" value="KH_dom_NusA-like"/>
</dbReference>
<dbReference type="InterPro" id="IPR009019">
    <property type="entry name" value="KH_sf_prok-type"/>
</dbReference>
<dbReference type="InterPro" id="IPR012340">
    <property type="entry name" value="NA-bd_OB-fold"/>
</dbReference>
<dbReference type="InterPro" id="IPR030842">
    <property type="entry name" value="NusA_bac"/>
</dbReference>
<dbReference type="InterPro" id="IPR036555">
    <property type="entry name" value="NusA_N_sf"/>
</dbReference>
<dbReference type="InterPro" id="IPR003029">
    <property type="entry name" value="S1_domain"/>
</dbReference>
<dbReference type="InterPro" id="IPR013735">
    <property type="entry name" value="TF_NusA_N"/>
</dbReference>
<dbReference type="InterPro" id="IPR010213">
    <property type="entry name" value="Tscrpt_termination_fac_NusA"/>
</dbReference>
<dbReference type="NCBIfam" id="TIGR01953">
    <property type="entry name" value="NusA"/>
    <property type="match status" value="1"/>
</dbReference>
<dbReference type="PANTHER" id="PTHR22648">
    <property type="entry name" value="TRANSCRIPTION TERMINATION FACTOR NUSA"/>
    <property type="match status" value="1"/>
</dbReference>
<dbReference type="PANTHER" id="PTHR22648:SF0">
    <property type="entry name" value="TRANSCRIPTION TERMINATION_ANTITERMINATION PROTEIN NUSA"/>
    <property type="match status" value="1"/>
</dbReference>
<dbReference type="Pfam" id="PF13184">
    <property type="entry name" value="KH_5"/>
    <property type="match status" value="1"/>
</dbReference>
<dbReference type="Pfam" id="PF08529">
    <property type="entry name" value="NusA_N"/>
    <property type="match status" value="1"/>
</dbReference>
<dbReference type="SMART" id="SM00322">
    <property type="entry name" value="KH"/>
    <property type="match status" value="2"/>
</dbReference>
<dbReference type="SMART" id="SM00316">
    <property type="entry name" value="S1"/>
    <property type="match status" value="1"/>
</dbReference>
<dbReference type="SUPFAM" id="SSF50249">
    <property type="entry name" value="Nucleic acid-binding proteins"/>
    <property type="match status" value="1"/>
</dbReference>
<dbReference type="SUPFAM" id="SSF54814">
    <property type="entry name" value="Prokaryotic type KH domain (KH-domain type II)"/>
    <property type="match status" value="2"/>
</dbReference>
<dbReference type="SUPFAM" id="SSF69705">
    <property type="entry name" value="Transcription factor NusA, N-terminal domain"/>
    <property type="match status" value="1"/>
</dbReference>
<dbReference type="PROSITE" id="PS50084">
    <property type="entry name" value="KH_TYPE_1"/>
    <property type="match status" value="1"/>
</dbReference>
<dbReference type="PROSITE" id="PS50126">
    <property type="entry name" value="S1"/>
    <property type="match status" value="1"/>
</dbReference>
<keyword id="KW-0963">Cytoplasm</keyword>
<keyword id="KW-1185">Reference proteome</keyword>
<keyword id="KW-0694">RNA-binding</keyword>
<keyword id="KW-0804">Transcription</keyword>
<keyword id="KW-0889">Transcription antitermination</keyword>
<keyword id="KW-0805">Transcription regulation</keyword>
<keyword id="KW-0806">Transcription termination</keyword>
<feature type="chain" id="PRO_0000181972" description="Transcription termination/antitermination protein NusA">
    <location>
        <begin position="1"/>
        <end position="540"/>
    </location>
</feature>
<feature type="domain" description="S1 motif" evidence="1">
    <location>
        <begin position="144"/>
        <end position="214"/>
    </location>
</feature>
<feature type="domain" description="KH" evidence="1">
    <location>
        <begin position="319"/>
        <end position="386"/>
    </location>
</feature>
<feature type="region of interest" description="Disordered" evidence="2">
    <location>
        <begin position="457"/>
        <end position="540"/>
    </location>
</feature>
<feature type="compositionally biased region" description="Pro residues" evidence="2">
    <location>
        <begin position="461"/>
        <end position="489"/>
    </location>
</feature>
<feature type="compositionally biased region" description="Basic and acidic residues" evidence="2">
    <location>
        <begin position="512"/>
        <end position="522"/>
    </location>
</feature>
<feature type="compositionally biased region" description="Polar residues" evidence="2">
    <location>
        <begin position="523"/>
        <end position="540"/>
    </location>
</feature>
<gene>
    <name evidence="1" type="primary">nusA</name>
    <name type="ordered locus">MPN_154</name>
    <name type="ORF">MP677</name>
</gene>
<sequence length="540" mass="60272">MNNQSNHFTNPLLQLIKNVAETKNLAIDDVVLCLKTALAQTYKKHLNYVNVEVNIDFNKGLMQIEQLFDVVDDNNEDYDDFLEMPLSEAKKLNPNLEVGGVLRKPVSLKDIKGDLISKMVLLFNQKINETAFKTVMSDFINEVGQVIEARVEDIDTNKDGGLKGYIVNLETTKGYMPKRELSKGEKLDIGKKYLFVIKEIQKQSSMWPITLSRSDSRLLEFLLNSNTPEIANGTIEIKKMERSPGTKSKVAVISKDPVVDPIAAILGPKGERIRGISEEFNGEIIDIVIWNEDKLKFLVNAVLPAEVVGYNILQDDERDTSIEIVVPANQIANVFGFKGINIRLISNLTGWSSVDVYTEKDAAEQGIEFTRVNFQPQGIFGIKKRRDKISNNPRNNNQQLASDKVFYTSKANVVDDEIIVDLAKQAEAKRVKQIKQEATKPELQLQQELNLEATPKVAAPTPTPAPQPTPAPTKVEPVPPPVSVTPKPIPKVNKPKPVVKPKSVFSITVEADDSKTKPEKSSAKTNTPQTKQTFDNFDDL</sequence>
<organism>
    <name type="scientific">Mycoplasma pneumoniae (strain ATCC 29342 / M129 / Subtype 1)</name>
    <name type="common">Mycoplasmoides pneumoniae</name>
    <dbReference type="NCBI Taxonomy" id="272634"/>
    <lineage>
        <taxon>Bacteria</taxon>
        <taxon>Bacillati</taxon>
        <taxon>Mycoplasmatota</taxon>
        <taxon>Mycoplasmoidales</taxon>
        <taxon>Mycoplasmoidaceae</taxon>
        <taxon>Mycoplasmoides</taxon>
    </lineage>
</organism>
<comment type="function">
    <text evidence="1">Participates in both transcription termination and antitermination.</text>
</comment>
<comment type="subunit">
    <text evidence="1">Monomer. Binds directly to the core enzyme of the DNA-dependent RNA polymerase and to nascent RNA.</text>
</comment>
<comment type="subcellular location">
    <subcellularLocation>
        <location evidence="1">Cytoplasm</location>
    </subcellularLocation>
</comment>
<comment type="similarity">
    <text evidence="1">Belongs to the NusA family.</text>
</comment>
<proteinExistence type="evidence at protein level"/>
<accession>P75591</accession>
<name>NUSA_MYCPN</name>
<reference key="1">
    <citation type="journal article" date="1996" name="Nucleic Acids Res.">
        <title>Complete sequence analysis of the genome of the bacterium Mycoplasma pneumoniae.</title>
        <authorList>
            <person name="Himmelreich R."/>
            <person name="Hilbert H."/>
            <person name="Plagens H."/>
            <person name="Pirkl E."/>
            <person name="Li B.-C."/>
            <person name="Herrmann R."/>
        </authorList>
    </citation>
    <scope>NUCLEOTIDE SEQUENCE [LARGE SCALE GENOMIC DNA]</scope>
    <source>
        <strain>ATCC 29342 / M129 / Subtype 1</strain>
    </source>
</reference>
<reference key="2">
    <citation type="journal article" date="2000" name="Electrophoresis">
        <title>Towards a two-dimensional proteome map of Mycoplasma pneumoniae.</title>
        <authorList>
            <person name="Regula J.T."/>
            <person name="Ueberle B."/>
            <person name="Boguth G."/>
            <person name="Goerg A."/>
            <person name="Schnoelzer M."/>
            <person name="Herrmann R."/>
            <person name="Frank R."/>
        </authorList>
    </citation>
    <scope>IDENTIFICATION BY MASS SPECTROMETRY</scope>
    <source>
        <strain>ATCC 29342 / M129 / Subtype 1</strain>
    </source>
</reference>